<evidence type="ECO:0000255" key="1">
    <source>
        <dbReference type="HAMAP-Rule" id="MF_00453"/>
    </source>
</evidence>
<dbReference type="EC" id="4.1.1.49" evidence="1"/>
<dbReference type="EMBL" id="CP000736">
    <property type="protein sequence ID" value="ABR52720.1"/>
    <property type="molecule type" value="Genomic_DNA"/>
</dbReference>
<dbReference type="SMR" id="A6U2Q2"/>
<dbReference type="KEGG" id="sah:SaurJH1_1878"/>
<dbReference type="HOGENOM" id="CLU_018247_0_1_9"/>
<dbReference type="UniPathway" id="UPA00138"/>
<dbReference type="GO" id="GO:0005829">
    <property type="term" value="C:cytosol"/>
    <property type="evidence" value="ECO:0007669"/>
    <property type="project" value="TreeGrafter"/>
</dbReference>
<dbReference type="GO" id="GO:0005524">
    <property type="term" value="F:ATP binding"/>
    <property type="evidence" value="ECO:0007669"/>
    <property type="project" value="UniProtKB-UniRule"/>
</dbReference>
<dbReference type="GO" id="GO:0046872">
    <property type="term" value="F:metal ion binding"/>
    <property type="evidence" value="ECO:0007669"/>
    <property type="project" value="UniProtKB-KW"/>
</dbReference>
<dbReference type="GO" id="GO:0004612">
    <property type="term" value="F:phosphoenolpyruvate carboxykinase (ATP) activity"/>
    <property type="evidence" value="ECO:0007669"/>
    <property type="project" value="UniProtKB-UniRule"/>
</dbReference>
<dbReference type="GO" id="GO:0006094">
    <property type="term" value="P:gluconeogenesis"/>
    <property type="evidence" value="ECO:0007669"/>
    <property type="project" value="UniProtKB-UniRule"/>
</dbReference>
<dbReference type="CDD" id="cd00484">
    <property type="entry name" value="PEPCK_ATP"/>
    <property type="match status" value="1"/>
</dbReference>
<dbReference type="FunFam" id="2.170.8.10:FF:000001">
    <property type="entry name" value="Phosphoenolpyruvate carboxykinase (ATP)"/>
    <property type="match status" value="1"/>
</dbReference>
<dbReference type="FunFam" id="3.40.449.10:FF:000001">
    <property type="entry name" value="Phosphoenolpyruvate carboxykinase (ATP)"/>
    <property type="match status" value="1"/>
</dbReference>
<dbReference type="Gene3D" id="3.90.228.20">
    <property type="match status" value="1"/>
</dbReference>
<dbReference type="Gene3D" id="3.40.449.10">
    <property type="entry name" value="Phosphoenolpyruvate Carboxykinase, domain 1"/>
    <property type="match status" value="1"/>
</dbReference>
<dbReference type="Gene3D" id="2.170.8.10">
    <property type="entry name" value="Phosphoenolpyruvate Carboxykinase, domain 2"/>
    <property type="match status" value="1"/>
</dbReference>
<dbReference type="HAMAP" id="MF_00453">
    <property type="entry name" value="PEPCK_ATP"/>
    <property type="match status" value="1"/>
</dbReference>
<dbReference type="InterPro" id="IPR001272">
    <property type="entry name" value="PEP_carboxykinase_ATP"/>
</dbReference>
<dbReference type="InterPro" id="IPR013035">
    <property type="entry name" value="PEP_carboxykinase_C"/>
</dbReference>
<dbReference type="InterPro" id="IPR008210">
    <property type="entry name" value="PEP_carboxykinase_N"/>
</dbReference>
<dbReference type="InterPro" id="IPR015994">
    <property type="entry name" value="PEPCK_ATP_CS"/>
</dbReference>
<dbReference type="NCBIfam" id="TIGR00224">
    <property type="entry name" value="pckA"/>
    <property type="match status" value="1"/>
</dbReference>
<dbReference type="NCBIfam" id="NF006820">
    <property type="entry name" value="PRK09344.1-2"/>
    <property type="match status" value="1"/>
</dbReference>
<dbReference type="NCBIfam" id="NF006821">
    <property type="entry name" value="PRK09344.1-3"/>
    <property type="match status" value="1"/>
</dbReference>
<dbReference type="PANTHER" id="PTHR30031:SF0">
    <property type="entry name" value="PHOSPHOENOLPYRUVATE CARBOXYKINASE (ATP)"/>
    <property type="match status" value="1"/>
</dbReference>
<dbReference type="PANTHER" id="PTHR30031">
    <property type="entry name" value="PHOSPHOENOLPYRUVATE CARBOXYKINASE ATP"/>
    <property type="match status" value="1"/>
</dbReference>
<dbReference type="Pfam" id="PF01293">
    <property type="entry name" value="PEPCK_ATP"/>
    <property type="match status" value="1"/>
</dbReference>
<dbReference type="PIRSF" id="PIRSF006294">
    <property type="entry name" value="PEP_crbxkin"/>
    <property type="match status" value="1"/>
</dbReference>
<dbReference type="SUPFAM" id="SSF68923">
    <property type="entry name" value="PEP carboxykinase N-terminal domain"/>
    <property type="match status" value="1"/>
</dbReference>
<dbReference type="SUPFAM" id="SSF53795">
    <property type="entry name" value="PEP carboxykinase-like"/>
    <property type="match status" value="1"/>
</dbReference>
<dbReference type="PROSITE" id="PS00532">
    <property type="entry name" value="PEPCK_ATP"/>
    <property type="match status" value="1"/>
</dbReference>
<reference key="1">
    <citation type="submission" date="2007-06" db="EMBL/GenBank/DDBJ databases">
        <title>Complete sequence of chromosome of Staphylococcus aureus subsp. aureus JH1.</title>
        <authorList>
            <consortium name="US DOE Joint Genome Institute"/>
            <person name="Copeland A."/>
            <person name="Lucas S."/>
            <person name="Lapidus A."/>
            <person name="Barry K."/>
            <person name="Detter J.C."/>
            <person name="Glavina del Rio T."/>
            <person name="Hammon N."/>
            <person name="Israni S."/>
            <person name="Dalin E."/>
            <person name="Tice H."/>
            <person name="Pitluck S."/>
            <person name="Chain P."/>
            <person name="Malfatti S."/>
            <person name="Shin M."/>
            <person name="Vergez L."/>
            <person name="Schmutz J."/>
            <person name="Larimer F."/>
            <person name="Land M."/>
            <person name="Hauser L."/>
            <person name="Kyrpides N."/>
            <person name="Ivanova N."/>
            <person name="Tomasz A."/>
            <person name="Richardson P."/>
        </authorList>
    </citation>
    <scope>NUCLEOTIDE SEQUENCE [LARGE SCALE GENOMIC DNA]</scope>
    <source>
        <strain>JH1</strain>
    </source>
</reference>
<gene>
    <name evidence="1" type="primary">pckA</name>
    <name type="ordered locus">SaurJH1_1878</name>
</gene>
<accession>A6U2Q2</accession>
<feature type="chain" id="PRO_1000081005" description="Phosphoenolpyruvate carboxykinase (ATP)">
    <location>
        <begin position="1"/>
        <end position="530"/>
    </location>
</feature>
<feature type="binding site" evidence="1">
    <location>
        <position position="58"/>
    </location>
    <ligand>
        <name>substrate</name>
    </ligand>
</feature>
<feature type="binding site" evidence="1">
    <location>
        <position position="195"/>
    </location>
    <ligand>
        <name>substrate</name>
    </ligand>
</feature>
<feature type="binding site" evidence="1">
    <location>
        <position position="201"/>
    </location>
    <ligand>
        <name>ATP</name>
        <dbReference type="ChEBI" id="CHEBI:30616"/>
    </ligand>
</feature>
<feature type="binding site" evidence="1">
    <location>
        <position position="201"/>
    </location>
    <ligand>
        <name>Mn(2+)</name>
        <dbReference type="ChEBI" id="CHEBI:29035"/>
    </ligand>
</feature>
<feature type="binding site" evidence="1">
    <location>
        <position position="201"/>
    </location>
    <ligand>
        <name>substrate</name>
    </ligand>
</feature>
<feature type="binding site" evidence="1">
    <location>
        <position position="220"/>
    </location>
    <ligand>
        <name>ATP</name>
        <dbReference type="ChEBI" id="CHEBI:30616"/>
    </ligand>
</feature>
<feature type="binding site" evidence="1">
    <location>
        <position position="220"/>
    </location>
    <ligand>
        <name>Mn(2+)</name>
        <dbReference type="ChEBI" id="CHEBI:29035"/>
    </ligand>
</feature>
<feature type="binding site" evidence="1">
    <location>
        <begin position="236"/>
        <end position="244"/>
    </location>
    <ligand>
        <name>ATP</name>
        <dbReference type="ChEBI" id="CHEBI:30616"/>
    </ligand>
</feature>
<feature type="binding site" evidence="1">
    <location>
        <position position="257"/>
    </location>
    <ligand>
        <name>Mn(2+)</name>
        <dbReference type="ChEBI" id="CHEBI:29035"/>
    </ligand>
</feature>
<feature type="binding site" evidence="1">
    <location>
        <position position="285"/>
    </location>
    <ligand>
        <name>ATP</name>
        <dbReference type="ChEBI" id="CHEBI:30616"/>
    </ligand>
</feature>
<feature type="binding site" evidence="1">
    <location>
        <position position="321"/>
    </location>
    <ligand>
        <name>ATP</name>
        <dbReference type="ChEBI" id="CHEBI:30616"/>
    </ligand>
</feature>
<feature type="binding site" evidence="1">
    <location>
        <position position="321"/>
    </location>
    <ligand>
        <name>substrate</name>
    </ligand>
</feature>
<feature type="binding site" evidence="1">
    <location>
        <begin position="440"/>
        <end position="441"/>
    </location>
    <ligand>
        <name>ATP</name>
        <dbReference type="ChEBI" id="CHEBI:30616"/>
    </ligand>
</feature>
<feature type="binding site" evidence="1">
    <location>
        <position position="446"/>
    </location>
    <ligand>
        <name>ATP</name>
        <dbReference type="ChEBI" id="CHEBI:30616"/>
    </ligand>
</feature>
<keyword id="KW-0067">ATP-binding</keyword>
<keyword id="KW-0963">Cytoplasm</keyword>
<keyword id="KW-0210">Decarboxylase</keyword>
<keyword id="KW-0312">Gluconeogenesis</keyword>
<keyword id="KW-0456">Lyase</keyword>
<keyword id="KW-0464">Manganese</keyword>
<keyword id="KW-0479">Metal-binding</keyword>
<keyword id="KW-0547">Nucleotide-binding</keyword>
<sequence length="530" mass="59377">MSVDTYTETTKIDKLLKKPTSHFQLSTTQLYNKILDNNEGVLTELGAVNASTGKYTGRSPKDKFFVSEPSYRDNIDWGEINQPIDEETFLKLYHKVLDYLDKKDELYVFKGYAGSDKDTMLKLTVINELAWHNLFAKNMFIRPESKEEATKIKPNFTIVSAPHFKADPEVDGTKSETFVIISFKHKVILIGGTEYAGEMKKGIFSVMNYLLPMQDIMSMHCSANVGEKGDVALFFGLSGTGKTTLSADPHRKLIGDDEHGWNKNGVFNIEGGCYAKAINLSKEKEPQIFDAIKYGAILENTVVAEDGSVDFEDNRYTENTRAAYPINHIDNIVVPSKAAHPNTIIFLTADAFGVIPPISKLNKDQAMYHFLSGFTSKLAGTERGVTEPEPSFSTCFGAPFFPLHPTVYADLLGELIDLHDVDVYLVNTGWTGGKYGVGRRISLHYTRQMVNQAISGKLKNAEYTKDSTFGLSIPVEIEDVPKTILNPINAWSDKEKYKAQAEDLIQRFEKNFEKFGEKVEHIAEKGSFNK</sequence>
<comment type="function">
    <text evidence="1">Involved in the gluconeogenesis. Catalyzes the conversion of oxaloacetate (OAA) to phosphoenolpyruvate (PEP) through direct phosphoryl transfer between the nucleoside triphosphate and OAA.</text>
</comment>
<comment type="catalytic activity">
    <reaction evidence="1">
        <text>oxaloacetate + ATP = phosphoenolpyruvate + ADP + CO2</text>
        <dbReference type="Rhea" id="RHEA:18617"/>
        <dbReference type="ChEBI" id="CHEBI:16452"/>
        <dbReference type="ChEBI" id="CHEBI:16526"/>
        <dbReference type="ChEBI" id="CHEBI:30616"/>
        <dbReference type="ChEBI" id="CHEBI:58702"/>
        <dbReference type="ChEBI" id="CHEBI:456216"/>
        <dbReference type="EC" id="4.1.1.49"/>
    </reaction>
</comment>
<comment type="cofactor">
    <cofactor evidence="1">
        <name>Mn(2+)</name>
        <dbReference type="ChEBI" id="CHEBI:29035"/>
    </cofactor>
    <text evidence="1">Binds 1 Mn(2+) ion per subunit.</text>
</comment>
<comment type="pathway">
    <text evidence="1">Carbohydrate biosynthesis; gluconeogenesis.</text>
</comment>
<comment type="subcellular location">
    <subcellularLocation>
        <location evidence="1">Cytoplasm</location>
    </subcellularLocation>
</comment>
<comment type="similarity">
    <text evidence="1">Belongs to the phosphoenolpyruvate carboxykinase (ATP) family.</text>
</comment>
<proteinExistence type="inferred from homology"/>
<organism>
    <name type="scientific">Staphylococcus aureus (strain JH1)</name>
    <dbReference type="NCBI Taxonomy" id="359787"/>
    <lineage>
        <taxon>Bacteria</taxon>
        <taxon>Bacillati</taxon>
        <taxon>Bacillota</taxon>
        <taxon>Bacilli</taxon>
        <taxon>Bacillales</taxon>
        <taxon>Staphylococcaceae</taxon>
        <taxon>Staphylococcus</taxon>
    </lineage>
</organism>
<protein>
    <recommendedName>
        <fullName evidence="1">Phosphoenolpyruvate carboxykinase (ATP)</fullName>
        <shortName evidence="1">PCK</shortName>
        <shortName evidence="1">PEP carboxykinase</shortName>
        <shortName evidence="1">PEPCK</shortName>
        <ecNumber evidence="1">4.1.1.49</ecNumber>
    </recommendedName>
</protein>
<name>PCKA_STAA2</name>